<dbReference type="EMBL" id="X05810">
    <property type="protein sequence ID" value="CAA29255.1"/>
    <property type="molecule type" value="Genomic_DNA"/>
</dbReference>
<dbReference type="EMBL" id="M12486">
    <property type="protein sequence ID" value="AAB61770.1"/>
    <property type="molecule type" value="Genomic_DNA"/>
</dbReference>
<dbReference type="EMBL" id="U70214">
    <property type="protein sequence ID" value="AAB08582.1"/>
    <property type="molecule type" value="Genomic_DNA"/>
</dbReference>
<dbReference type="EMBL" id="U00096">
    <property type="protein sequence ID" value="AAC73263.1"/>
    <property type="molecule type" value="Genomic_DNA"/>
</dbReference>
<dbReference type="EMBL" id="AP009048">
    <property type="protein sequence ID" value="BAB96728.2"/>
    <property type="molecule type" value="Genomic_DNA"/>
</dbReference>
<dbReference type="PIR" id="H64738">
    <property type="entry name" value="QRECFD"/>
</dbReference>
<dbReference type="RefSeq" id="NP_414694.1">
    <property type="nucleotide sequence ID" value="NC_000913.3"/>
</dbReference>
<dbReference type="RefSeq" id="WP_001310529.1">
    <property type="nucleotide sequence ID" value="NZ_SSZK01000004.1"/>
</dbReference>
<dbReference type="PDB" id="1EFD">
    <property type="method" value="X-ray"/>
    <property type="resolution" value="1.90 A"/>
    <property type="chains" value="N=31-296"/>
</dbReference>
<dbReference type="PDB" id="1ESZ">
    <property type="method" value="X-ray"/>
    <property type="resolution" value="2.00 A"/>
    <property type="chains" value="A=31-296"/>
</dbReference>
<dbReference type="PDB" id="1K2V">
    <property type="method" value="X-ray"/>
    <property type="resolution" value="1.97 A"/>
    <property type="chains" value="N=31-296"/>
</dbReference>
<dbReference type="PDB" id="1K7S">
    <property type="method" value="X-ray"/>
    <property type="resolution" value="2.60 A"/>
    <property type="chains" value="N=33-296"/>
</dbReference>
<dbReference type="PDB" id="7LB8">
    <property type="method" value="EM"/>
    <property type="resolution" value="3.40 A"/>
    <property type="chains" value="D=1-296"/>
</dbReference>
<dbReference type="PDBsum" id="1EFD"/>
<dbReference type="PDBsum" id="1ESZ"/>
<dbReference type="PDBsum" id="1K2V"/>
<dbReference type="PDBsum" id="1K7S"/>
<dbReference type="PDBsum" id="7LB8"/>
<dbReference type="EMDB" id="EMD-23251"/>
<dbReference type="SMR" id="P07822"/>
<dbReference type="BioGRID" id="4263041">
    <property type="interactions" value="343"/>
</dbReference>
<dbReference type="ComplexPortal" id="CPX-4286">
    <property type="entry name" value="Ferric-hydroxamate ABC transporter complex"/>
</dbReference>
<dbReference type="FunCoup" id="P07822">
    <property type="interactions" value="198"/>
</dbReference>
<dbReference type="IntAct" id="P07822">
    <property type="interactions" value="2"/>
</dbReference>
<dbReference type="STRING" id="511145.b0152"/>
<dbReference type="DrugBank" id="DB01747">
    <property type="generic name" value="Coprogen"/>
</dbReference>
<dbReference type="DrugBank" id="DB02724">
    <property type="generic name" value="Delta-2-Albomycin A1"/>
</dbReference>
<dbReference type="DrugBank" id="DB13949">
    <property type="generic name" value="Ferric cation"/>
</dbReference>
<dbReference type="DrugBank" id="DB03436">
    <property type="generic name" value="Gallichrome"/>
</dbReference>
<dbReference type="DrugBank" id="DB14520">
    <property type="generic name" value="Tetraferric tricitrate decahydrate"/>
</dbReference>
<dbReference type="TCDB" id="3.A.1.14.3">
    <property type="family name" value="the atp-binding cassette (abc) superfamily"/>
</dbReference>
<dbReference type="PaxDb" id="511145-b0152"/>
<dbReference type="EnsemblBacteria" id="AAC73263">
    <property type="protein sequence ID" value="AAC73263"/>
    <property type="gene ID" value="b0152"/>
</dbReference>
<dbReference type="GeneID" id="75170052"/>
<dbReference type="GeneID" id="947510"/>
<dbReference type="KEGG" id="ecj:JW0148"/>
<dbReference type="KEGG" id="eco:b0152"/>
<dbReference type="KEGG" id="ecoc:C3026_00690"/>
<dbReference type="PATRIC" id="fig|1411691.4.peg.2128"/>
<dbReference type="EchoBASE" id="EB0301"/>
<dbReference type="eggNOG" id="COG0614">
    <property type="taxonomic scope" value="Bacteria"/>
</dbReference>
<dbReference type="HOGENOM" id="CLU_038034_10_0_6"/>
<dbReference type="InParanoid" id="P07822"/>
<dbReference type="OMA" id="VLCFDHG"/>
<dbReference type="OrthoDB" id="6160519at2"/>
<dbReference type="PhylomeDB" id="P07822"/>
<dbReference type="BioCyc" id="EcoCyc:FHUD-MONOMER"/>
<dbReference type="BioCyc" id="MetaCyc:FHUD-MONOMER"/>
<dbReference type="EvolutionaryTrace" id="P07822"/>
<dbReference type="PHI-base" id="PHI:10989"/>
<dbReference type="PRO" id="PR:P07822"/>
<dbReference type="Proteomes" id="UP000000625">
    <property type="component" value="Chromosome"/>
</dbReference>
<dbReference type="GO" id="GO:0055052">
    <property type="term" value="C:ATP-binding cassette (ABC) transporter complex, substrate-binding subunit-containing"/>
    <property type="evidence" value="ECO:0000303"/>
    <property type="project" value="ComplexPortal"/>
</dbReference>
<dbReference type="GO" id="GO:0030288">
    <property type="term" value="C:outer membrane-bounded periplasmic space"/>
    <property type="evidence" value="ECO:0000314"/>
    <property type="project" value="EcoCyc"/>
</dbReference>
<dbReference type="GO" id="GO:0015687">
    <property type="term" value="P:ferric-hydroxamate import into cell"/>
    <property type="evidence" value="ECO:0000269"/>
    <property type="project" value="EcoCyc"/>
</dbReference>
<dbReference type="GO" id="GO:0098711">
    <property type="term" value="P:iron ion import across plasma membrane"/>
    <property type="evidence" value="ECO:0000303"/>
    <property type="project" value="ComplexPortal"/>
</dbReference>
<dbReference type="CDD" id="cd01146">
    <property type="entry name" value="FhuD"/>
    <property type="match status" value="1"/>
</dbReference>
<dbReference type="FunFam" id="3.40.50.1980:FF:000015">
    <property type="entry name" value="Fe(3+)-hydroxamate ABC transporter substrate-binding protein FhuD"/>
    <property type="match status" value="1"/>
</dbReference>
<dbReference type="FunFam" id="3.40.50.1980:FF:000016">
    <property type="entry name" value="Fe(3+)-hydroxamate ABC transporter substrate-binding protein FhuD"/>
    <property type="match status" value="1"/>
</dbReference>
<dbReference type="Gene3D" id="3.40.50.1980">
    <property type="entry name" value="Nitrogenase molybdenum iron protein domain"/>
    <property type="match status" value="2"/>
</dbReference>
<dbReference type="InterPro" id="IPR002491">
    <property type="entry name" value="ABC_transptr_periplasmic_BD"/>
</dbReference>
<dbReference type="InterPro" id="IPR051313">
    <property type="entry name" value="Bact_iron-sidero_bind"/>
</dbReference>
<dbReference type="NCBIfam" id="NF007864">
    <property type="entry name" value="PRK10576.1"/>
    <property type="match status" value="1"/>
</dbReference>
<dbReference type="PANTHER" id="PTHR30532">
    <property type="entry name" value="IRON III DICITRATE-BINDING PERIPLASMIC PROTEIN"/>
    <property type="match status" value="1"/>
</dbReference>
<dbReference type="PANTHER" id="PTHR30532:SF1">
    <property type="entry name" value="IRON(3+)-HYDROXAMATE-BINDING PROTEIN FHUD"/>
    <property type="match status" value="1"/>
</dbReference>
<dbReference type="Pfam" id="PF01497">
    <property type="entry name" value="Peripla_BP_2"/>
    <property type="match status" value="1"/>
</dbReference>
<dbReference type="PRINTS" id="PR01715">
    <property type="entry name" value="FERRIBNDNGPP"/>
</dbReference>
<dbReference type="SUPFAM" id="SSF53807">
    <property type="entry name" value="Helical backbone' metal receptor"/>
    <property type="match status" value="1"/>
</dbReference>
<dbReference type="PROSITE" id="PS50983">
    <property type="entry name" value="FE_B12_PBP"/>
    <property type="match status" value="1"/>
</dbReference>
<comment type="function">
    <text evidence="2 3 6 7 8">Part of the ABC transporter complex FhuCDB involved in iron(3+)-hydroxamate import. Binds the iron(3+)-hydroxamate complex and transfers it to the membrane-bound permease. Required for the transport of all iron(3+)-hydroxamate siderophores such as ferrichrome, gallichrome, desferrioxamine, coprogen, aerobactin, shizokinen, rhodotorulic acid and the antibiotic albomycin.</text>
</comment>
<comment type="subunit">
    <text evidence="7 8 9">The complex is composed of two ATP-binding proteins (FhuC), a transmembrane protein (FhuB) and a solute-binding protein (FhuD) (PubMed:34887516). FhuD interacts with FhuB (PubMed:34887516, PubMed:8522527, PubMed:9426146). Substrate-loaded FhuD binds FhuB more strongly than FhuD alone (PubMed:34887516).</text>
</comment>
<comment type="subcellular location">
    <subcellularLocation>
        <location evidence="4">Periplasm</location>
    </subcellularLocation>
</comment>
<comment type="induction">
    <text evidence="5">Induced 1.3-fold by hydroxyurea.</text>
</comment>
<comment type="PTM">
    <text evidence="4">Exported by the Tat system. The position of the signal peptide cleavage has been experimentally proven. Can also be exported by the Sec system.</text>
</comment>
<comment type="similarity">
    <text evidence="10">Belongs to the bacterial solute-binding protein 8 family.</text>
</comment>
<proteinExistence type="evidence at protein level"/>
<gene>
    <name type="primary">fhuD</name>
    <name type="ordered locus">b0152</name>
    <name type="ordered locus">JW0148</name>
</gene>
<accession>P07822</accession>
<accession>P77711</accession>
<sequence length="296" mass="32998">MSGLPLISRRRLLTAMALSPLLWQMNTAHAAAIDPNRIVALEWLPVELLLALGIVPYGVADTINYRLWVSEPPLPDSVIDVGLRTEPNLELLTEMKPSFMVWSAGYGPSPEMLARIAPGRGFNFSDGKQPLAMARKSLTEMADLLNLQSAAETHLAQYEDFIRSMKPRFVKRGARPLLLTTLIDPRHMLVFGPNSLFQEILDEYGIPNAWQGETNFWGSTAVSIDRLAAYKDVDVLCFDHDNSKDMDALMATPLWQAMPFVRAGRFQRVPAVWFYGATLSAMHFVRVLDNAIGGKA</sequence>
<feature type="signal peptide" description="Tat-type signal">
    <location>
        <begin position="1"/>
        <end position="30"/>
    </location>
</feature>
<feature type="chain" id="PRO_0000031824" description="Iron(3+)-hydroxamate-binding protein FhuD">
    <location>
        <begin position="31"/>
        <end position="296"/>
    </location>
</feature>
<feature type="domain" description="Fe/B12 periplasmic-binding" evidence="1">
    <location>
        <begin position="37"/>
        <end position="296"/>
    </location>
</feature>
<feature type="binding site" evidence="3 11">
    <location>
        <position position="68"/>
    </location>
    <ligand>
        <name>Fe(III)-coprogen</name>
        <dbReference type="ChEBI" id="CHEBI:83101"/>
    </ligand>
</feature>
<feature type="binding site" evidence="3 11">
    <location>
        <position position="84"/>
    </location>
    <ligand>
        <name>Fe(III)-coprogen</name>
        <dbReference type="ChEBI" id="CHEBI:83101"/>
    </ligand>
</feature>
<feature type="binding site" evidence="3 11">
    <location>
        <position position="103"/>
    </location>
    <ligand>
        <name>Fe(III)-coprogen</name>
        <dbReference type="ChEBI" id="CHEBI:83101"/>
    </ligand>
</feature>
<feature type="binding site" evidence="3 11">
    <location>
        <position position="106"/>
    </location>
    <ligand>
        <name>Fe(III)-coprogen</name>
        <dbReference type="ChEBI" id="CHEBI:83101"/>
    </ligand>
</feature>
<feature type="binding site" evidence="3 11">
    <location>
        <position position="124"/>
    </location>
    <ligand>
        <name>Fe(III)-coprogen</name>
        <dbReference type="ChEBI" id="CHEBI:83101"/>
    </ligand>
</feature>
<feature type="binding site" evidence="3 11">
    <location>
        <position position="217"/>
    </location>
    <ligand>
        <name>Fe(III)-coprogen</name>
        <dbReference type="ChEBI" id="CHEBI:83101"/>
    </ligand>
</feature>
<feature type="binding site" evidence="3 11">
    <location>
        <position position="273"/>
    </location>
    <ligand>
        <name>Fe(III)-coprogen</name>
        <dbReference type="ChEBI" id="CHEBI:83101"/>
    </ligand>
</feature>
<feature type="binding site" evidence="3 11">
    <location>
        <position position="274"/>
    </location>
    <ligand>
        <name>Fe(III)-coprogen</name>
        <dbReference type="ChEBI" id="CHEBI:83101"/>
    </ligand>
</feature>
<feature type="binding site" evidence="3 11">
    <location>
        <position position="275"/>
    </location>
    <ligand>
        <name>Fe(III)-coprogen</name>
        <dbReference type="ChEBI" id="CHEBI:83101"/>
    </ligand>
</feature>
<feature type="site" description="Interaction with FhuB" evidence="7 12">
    <location>
        <position position="86"/>
    </location>
</feature>
<feature type="site" description="Interaction with FhuB" evidence="7 12">
    <location>
        <position position="88"/>
    </location>
</feature>
<feature type="site" description="Interaction with FhuB" evidence="7 12">
    <location>
        <position position="90"/>
    </location>
</feature>
<feature type="site" description="Interaction with FhuB" evidence="7 12">
    <location>
        <position position="187"/>
    </location>
</feature>
<feature type="site" description="Interaction with FhuB" evidence="7 12">
    <location>
        <position position="223"/>
    </location>
</feature>
<feature type="site" description="Interaction with FhuB" evidence="7 12">
    <location>
        <position position="226"/>
    </location>
</feature>
<feature type="mutagenesis site" description="Decreases binding of coprogen. Does not bind aerobactin and ferrichrome. Increases resistance to albomycin." evidence="8">
    <original>W</original>
    <variation>L</variation>
    <location>
        <position position="68"/>
    </location>
</feature>
<feature type="sequence conflict" description="In Ref. 1; CAA29255." evidence="10" ref="1">
    <original>L</original>
    <variation>V</variation>
    <location>
        <position position="48"/>
    </location>
</feature>
<feature type="sequence conflict" description="In Ref. 1; AAB61770." evidence="10" ref="1">
    <original>H</original>
    <variation>D</variation>
    <location>
        <position position="154"/>
    </location>
</feature>
<feature type="strand" evidence="13">
    <location>
        <begin position="37"/>
        <end position="42"/>
    </location>
</feature>
<feature type="helix" evidence="13">
    <location>
        <begin position="43"/>
        <end position="51"/>
    </location>
</feature>
<feature type="strand" evidence="13">
    <location>
        <begin position="57"/>
        <end position="60"/>
    </location>
</feature>
<feature type="helix" evidence="13">
    <location>
        <begin position="62"/>
        <end position="68"/>
    </location>
</feature>
<feature type="strand" evidence="14">
    <location>
        <begin position="78"/>
        <end position="80"/>
    </location>
</feature>
<feature type="strand" evidence="13">
    <location>
        <begin position="84"/>
        <end position="87"/>
    </location>
</feature>
<feature type="helix" evidence="13">
    <location>
        <begin position="89"/>
        <end position="95"/>
    </location>
</feature>
<feature type="strand" evidence="13">
    <location>
        <begin position="98"/>
        <end position="103"/>
    </location>
</feature>
<feature type="strand" evidence="13">
    <location>
        <begin position="106"/>
        <end position="108"/>
    </location>
</feature>
<feature type="helix" evidence="13">
    <location>
        <begin position="110"/>
        <end position="116"/>
    </location>
</feature>
<feature type="strand" evidence="13">
    <location>
        <begin position="119"/>
        <end position="122"/>
    </location>
</feature>
<feature type="strand" evidence="13">
    <location>
        <begin position="126"/>
        <end position="128"/>
    </location>
</feature>
<feature type="helix" evidence="13">
    <location>
        <begin position="130"/>
        <end position="145"/>
    </location>
</feature>
<feature type="helix" evidence="13">
    <location>
        <begin position="148"/>
        <end position="165"/>
    </location>
</feature>
<feature type="helix" evidence="13">
    <location>
        <begin position="166"/>
        <end position="169"/>
    </location>
</feature>
<feature type="strand" evidence="13">
    <location>
        <begin position="170"/>
        <end position="172"/>
    </location>
</feature>
<feature type="strand" evidence="13">
    <location>
        <begin position="177"/>
        <end position="184"/>
    </location>
</feature>
<feature type="strand" evidence="13">
    <location>
        <begin position="187"/>
        <end position="191"/>
    </location>
</feature>
<feature type="helix" evidence="13">
    <location>
        <begin position="198"/>
        <end position="203"/>
    </location>
</feature>
<feature type="strand" evidence="13">
    <location>
        <begin position="218"/>
        <end position="222"/>
    </location>
</feature>
<feature type="helix" evidence="13">
    <location>
        <begin position="224"/>
        <end position="229"/>
    </location>
</feature>
<feature type="strand" evidence="13">
    <location>
        <begin position="234"/>
        <end position="238"/>
    </location>
</feature>
<feature type="helix" evidence="13">
    <location>
        <begin position="243"/>
        <end position="250"/>
    </location>
</feature>
<feature type="helix" evidence="13">
    <location>
        <begin position="253"/>
        <end position="257"/>
    </location>
</feature>
<feature type="helix" evidence="13">
    <location>
        <begin position="259"/>
        <end position="262"/>
    </location>
</feature>
<feature type="strand" evidence="13">
    <location>
        <begin position="266"/>
        <end position="269"/>
    </location>
</feature>
<feature type="helix" evidence="13">
    <location>
        <begin position="278"/>
        <end position="292"/>
    </location>
</feature>
<reference key="1">
    <citation type="journal article" date="1987" name="J. Bacteriol.">
        <title>fhuC and fhuD genes for iron (III)-ferrichrome transport into Escherichia coli K-12.</title>
        <authorList>
            <person name="Coulton J.W."/>
            <person name="Mason P."/>
            <person name="Allatt D.D."/>
        </authorList>
    </citation>
    <scope>NUCLEOTIDE SEQUENCE [GENOMIC DNA]</scope>
    <source>
        <strain>K12</strain>
    </source>
</reference>
<reference key="2">
    <citation type="journal article" date="1987" name="Mol. Gen. Genet.">
        <title>Nucleotide sequence of the fhuC and fhuD genes involved in iron (III) hydroxamate transport: domains in FhuC homologous to ATP-binding proteins.</title>
        <authorList>
            <person name="Burkhardt R."/>
            <person name="Braun V."/>
        </authorList>
    </citation>
    <scope>NUCLEOTIDE SEQUENCE [GENOMIC DNA]</scope>
</reference>
<reference key="3">
    <citation type="journal article" date="1994" name="Nucleic Acids Res.">
        <title>Systematic sequencing of the Escherichia coli genome: analysis of the 2.4-4.1 min (110,917-193,643 bp) region.</title>
        <authorList>
            <person name="Fujita N."/>
            <person name="Mori H."/>
            <person name="Yura T."/>
            <person name="Ishihama A."/>
        </authorList>
    </citation>
    <scope>NUCLEOTIDE SEQUENCE [LARGE SCALE GENOMIC DNA]</scope>
    <source>
        <strain>K12 / W3110 / ATCC 27325 / DSM 5911</strain>
    </source>
</reference>
<reference key="4">
    <citation type="submission" date="1997-01" db="EMBL/GenBank/DDBJ databases">
        <title>Sequence of minutes 4-25 of Escherichia coli.</title>
        <authorList>
            <person name="Chung E."/>
            <person name="Allen E."/>
            <person name="Araujo R."/>
            <person name="Aparicio A.M."/>
            <person name="Davis K."/>
            <person name="Duncan M."/>
            <person name="Federspiel N."/>
            <person name="Hyman R."/>
            <person name="Kalman S."/>
            <person name="Komp C."/>
            <person name="Kurdi O."/>
            <person name="Lew H."/>
            <person name="Lin D."/>
            <person name="Namath A."/>
            <person name="Oefner P."/>
            <person name="Roberts D."/>
            <person name="Schramm S."/>
            <person name="Davis R.W."/>
        </authorList>
    </citation>
    <scope>NUCLEOTIDE SEQUENCE [LARGE SCALE GENOMIC DNA]</scope>
    <source>
        <strain>K12 / MG1655 / ATCC 47076</strain>
    </source>
</reference>
<reference key="5">
    <citation type="journal article" date="1997" name="Science">
        <title>The complete genome sequence of Escherichia coli K-12.</title>
        <authorList>
            <person name="Blattner F.R."/>
            <person name="Plunkett G. III"/>
            <person name="Bloch C.A."/>
            <person name="Perna N.T."/>
            <person name="Burland V."/>
            <person name="Riley M."/>
            <person name="Collado-Vides J."/>
            <person name="Glasner J.D."/>
            <person name="Rode C.K."/>
            <person name="Mayhew G.F."/>
            <person name="Gregor J."/>
            <person name="Davis N.W."/>
            <person name="Kirkpatrick H.A."/>
            <person name="Goeden M.A."/>
            <person name="Rose D.J."/>
            <person name="Mau B."/>
            <person name="Shao Y."/>
        </authorList>
    </citation>
    <scope>NUCLEOTIDE SEQUENCE [LARGE SCALE GENOMIC DNA]</scope>
    <source>
        <strain>K12 / MG1655 / ATCC 47076</strain>
    </source>
</reference>
<reference key="6">
    <citation type="journal article" date="2006" name="Mol. Syst. Biol.">
        <title>Highly accurate genome sequences of Escherichia coli K-12 strains MG1655 and W3110.</title>
        <authorList>
            <person name="Hayashi K."/>
            <person name="Morooka N."/>
            <person name="Yamamoto Y."/>
            <person name="Fujita K."/>
            <person name="Isono K."/>
            <person name="Choi S."/>
            <person name="Ohtsubo E."/>
            <person name="Baba T."/>
            <person name="Wanner B.L."/>
            <person name="Mori H."/>
            <person name="Horiuchi T."/>
        </authorList>
    </citation>
    <scope>NUCLEOTIDE SEQUENCE [LARGE SCALE GENOMIC DNA]</scope>
    <scope>SEQUENCE REVISION TO 154</scope>
    <source>
        <strain>K12 / W3110 / ATCC 27325 / DSM 5911</strain>
    </source>
</reference>
<reference key="7">
    <citation type="journal article" date="1995" name="Mol. Gen. Genet.">
        <title>In vivo reconstitution of an active siderophore transport system by a binding protein derivative lacking a signal sequence.</title>
        <authorList>
            <person name="Rohrback M.R."/>
            <person name="Paul S."/>
            <person name="Koster W."/>
        </authorList>
    </citation>
    <scope>PROTEIN SEQUENCE OF 32-39</scope>
</reference>
<reference key="8">
    <citation type="journal article" date="1990" name="J. Biol. Chem.">
        <title>Iron (III) hydroxamate transport into Escherichia coli. Substrate binding to the periplasmic FhuD protein.</title>
        <authorList>
            <person name="Koester W."/>
            <person name="Braun V."/>
        </authorList>
    </citation>
    <scope>FUNCTION</scope>
</reference>
<reference key="9">
    <citation type="journal article" date="1995" name="J. Bacteriol.">
        <title>Ferrichrome transport in Escherichia coli K-12: altered substrate specificity of mutated periplasmic FhuD and interaction of FhuD with the integral membrane protein FhuB.</title>
        <authorList>
            <person name="Rohrbach M.R."/>
            <person name="Braun V."/>
            <person name="Koester W."/>
        </authorList>
    </citation>
    <scope>FUNCTION</scope>
    <scope>INTERACTION WITH FHUB</scope>
    <scope>MUTAGENESIS OF TRP-68</scope>
</reference>
<reference key="10">
    <citation type="journal article" date="1997" name="Mol. Microbiol.">
        <title>ATP-dependent ferric hydroxamate transport system in Escherichia coli: periplasmic FhuD interacts with a periplasmic and with a transmembrane/cytoplasmic region of the integral membrane protein FhuB, as revealed by competitive peptide mapping.</title>
        <authorList>
            <person name="Mademidis A."/>
            <person name="Killmann H."/>
            <person name="Kraas W."/>
            <person name="Flechsler I."/>
            <person name="Jung G."/>
            <person name="Braun V."/>
        </authorList>
    </citation>
    <scope>INTERACTION WITH FHUB</scope>
</reference>
<reference key="11">
    <citation type="journal article" date="2007" name="J. Biol. Chem.">
        <title>Export pathway selectivity of Escherichia coli twin arginine translocation signal peptides.</title>
        <authorList>
            <person name="Tullman-Ercek D."/>
            <person name="DeLisa M.P."/>
            <person name="Kawarasaki Y."/>
            <person name="Iranpour P."/>
            <person name="Ribnicky B."/>
            <person name="Palmer T."/>
            <person name="Georgiou G."/>
        </authorList>
    </citation>
    <scope>EXPORT VIA THE TAT-SYSTEM AND THE SEC-SYSTEM</scope>
    <scope>SUBCELLULAR LOCATION</scope>
</reference>
<reference key="12">
    <citation type="journal article" date="2009" name="Mol. Cell">
        <title>Hydroxyurea induces hydroxyl radical-mediated cell death in Escherichia coli.</title>
        <authorList>
            <person name="Davies B.W."/>
            <person name="Kohanski M.A."/>
            <person name="Simmons L.A."/>
            <person name="Winkler J.A."/>
            <person name="Collins J.J."/>
            <person name="Walker G.C."/>
        </authorList>
    </citation>
    <scope>INDUCTION BY HYDROXYUREA</scope>
    <source>
        <strain>K12 / MC4100 / ATCC 35695 / DSM 6574</strain>
    </source>
</reference>
<reference key="13">
    <citation type="journal article" date="2000" name="Nat. Struct. Biol.">
        <title>The structure of the ferric siderophore binding protein FhuD complexed with gallichrome.</title>
        <authorList>
            <person name="Clarke T.E."/>
            <person name="Ku S.-Y."/>
            <person name="Dougan D.R."/>
            <person name="Vogel H.J."/>
            <person name="Tari L.W."/>
        </authorList>
    </citation>
    <scope>X-RAY CRYSTALLOGRAPHY (1.9 ANGSTROMS) OF 31-296 IN COMPLEX WITH GALLICHROME</scope>
    <scope>FUNCTION</scope>
</reference>
<reference key="14">
    <citation type="journal article" date="2002" name="J. Biol. Chem.">
        <title>X-ray crystallographic structures of the Escherichia coli periplasmic protein FhuD bound to hydroxamate-type siderophores and the antibiotic albomycin.</title>
        <authorList>
            <person name="Clarke T.E."/>
            <person name="Braun V."/>
            <person name="Winkelmann G."/>
            <person name="Tari L.W."/>
            <person name="Vogel H.J."/>
        </authorList>
    </citation>
    <scope>X-RAY CRYSTALLOGRAPHY (2.0 ANGSTROMS) OF 31-296 IN COMPLEX WITH COPROGEN; DESFERRIOXAMINE AND ALBOMYCIN</scope>
    <scope>FUNCTION</scope>
</reference>
<reference key="15">
    <citation type="journal article" date="2021" name="Commun. Biol.">
        <title>Cryo-EM reveals unique structural features of the FhuCDB Escherichia coli ferrichrome importer.</title>
        <authorList>
            <person name="Hu W."/>
            <person name="Zheng H."/>
        </authorList>
    </citation>
    <scope>STRUCTURE BY ELECTRON MICROSCOPY (3.4 ANGSTROMS)</scope>
    <scope>FUNCTION</scope>
    <scope>INTERACTION WITH FHUB</scope>
    <scope>SUBUNIT</scope>
    <scope>SUBSTRATE IMPORT MECHANISM OF THE FHUCDB COMPLEX</scope>
</reference>
<name>FHUD_ECOLI</name>
<evidence type="ECO:0000255" key="1">
    <source>
        <dbReference type="PROSITE-ProRule" id="PRU00344"/>
    </source>
</evidence>
<evidence type="ECO:0000269" key="2">
    <source>
    </source>
</evidence>
<evidence type="ECO:0000269" key="3">
    <source>
    </source>
</evidence>
<evidence type="ECO:0000269" key="4">
    <source>
    </source>
</evidence>
<evidence type="ECO:0000269" key="5">
    <source>
    </source>
</evidence>
<evidence type="ECO:0000269" key="6">
    <source>
    </source>
</evidence>
<evidence type="ECO:0000269" key="7">
    <source>
    </source>
</evidence>
<evidence type="ECO:0000269" key="8">
    <source>
    </source>
</evidence>
<evidence type="ECO:0000269" key="9">
    <source>
    </source>
</evidence>
<evidence type="ECO:0000305" key="10"/>
<evidence type="ECO:0007744" key="11">
    <source>
        <dbReference type="PDB" id="1ESZ"/>
    </source>
</evidence>
<evidence type="ECO:0007744" key="12">
    <source>
        <dbReference type="PDB" id="7LB8"/>
    </source>
</evidence>
<evidence type="ECO:0007829" key="13">
    <source>
        <dbReference type="PDB" id="1EFD"/>
    </source>
</evidence>
<evidence type="ECO:0007829" key="14">
    <source>
        <dbReference type="PDB" id="1K2V"/>
    </source>
</evidence>
<keyword id="KW-0002">3D-structure</keyword>
<keyword id="KW-0903">Direct protein sequencing</keyword>
<keyword id="KW-0406">Ion transport</keyword>
<keyword id="KW-0408">Iron</keyword>
<keyword id="KW-0410">Iron transport</keyword>
<keyword id="KW-0574">Periplasm</keyword>
<keyword id="KW-1185">Reference proteome</keyword>
<keyword id="KW-0732">Signal</keyword>
<keyword id="KW-0813">Transport</keyword>
<organism>
    <name type="scientific">Escherichia coli (strain K12)</name>
    <dbReference type="NCBI Taxonomy" id="83333"/>
    <lineage>
        <taxon>Bacteria</taxon>
        <taxon>Pseudomonadati</taxon>
        <taxon>Pseudomonadota</taxon>
        <taxon>Gammaproteobacteria</taxon>
        <taxon>Enterobacterales</taxon>
        <taxon>Enterobacteriaceae</taxon>
        <taxon>Escherichia</taxon>
    </lineage>
</organism>
<protein>
    <recommendedName>
        <fullName evidence="10">Iron(3+)-hydroxamate-binding protein FhuD</fullName>
    </recommendedName>
    <alternativeName>
        <fullName evidence="10">Ferric hydroxamate uptake protein D</fullName>
    </alternativeName>
    <alternativeName>
        <fullName evidence="10">Ferrichrome-binding periplasmic protein</fullName>
    </alternativeName>
    <alternativeName>
        <fullName evidence="10">Iron(III)-hydroxamate-binding protein FhuD</fullName>
    </alternativeName>
</protein>